<proteinExistence type="inferred from homology"/>
<gene>
    <name type="primary">btgE</name>
    <name type="ORF">AFUB_081940</name>
</gene>
<organism>
    <name type="scientific">Aspergillus fumigatus (strain CBS 144.89 / FGSC A1163 / CEA10)</name>
    <name type="common">Neosartorya fumigata</name>
    <dbReference type="NCBI Taxonomy" id="451804"/>
    <lineage>
        <taxon>Eukaryota</taxon>
        <taxon>Fungi</taxon>
        <taxon>Dikarya</taxon>
        <taxon>Ascomycota</taxon>
        <taxon>Pezizomycotina</taxon>
        <taxon>Eurotiomycetes</taxon>
        <taxon>Eurotiomycetidae</taxon>
        <taxon>Eurotiales</taxon>
        <taxon>Aspergillaceae</taxon>
        <taxon>Aspergillus</taxon>
        <taxon>Aspergillus subgen. Fumigati</taxon>
    </lineage>
</organism>
<keyword id="KW-0119">Carbohydrate metabolism</keyword>
<keyword id="KW-0134">Cell wall</keyword>
<keyword id="KW-0136">Cellulose degradation</keyword>
<keyword id="KW-0326">Glycosidase</keyword>
<keyword id="KW-0378">Hydrolase</keyword>
<keyword id="KW-0624">Polysaccharide degradation</keyword>
<keyword id="KW-0964">Secreted</keyword>
<keyword id="KW-0732">Signal</keyword>
<accession>B0Y9Q9</accession>
<protein>
    <recommendedName>
        <fullName>Probable beta-glucosidase btgE</fullName>
        <ecNumber>3.2.1.21</ecNumber>
    </recommendedName>
    <alternativeName>
        <fullName>Beta-D-glucoside glucohydrolase btgE</fullName>
    </alternativeName>
    <alternativeName>
        <fullName>Cellobiase btgE</fullName>
    </alternativeName>
    <alternativeName>
        <fullName>Gentiobiase btgE</fullName>
    </alternativeName>
</protein>
<evidence type="ECO:0000250" key="1"/>
<evidence type="ECO:0000250" key="2">
    <source>
        <dbReference type="UniProtKB" id="O22317"/>
    </source>
</evidence>
<evidence type="ECO:0000255" key="3"/>
<evidence type="ECO:0000256" key="4">
    <source>
        <dbReference type="SAM" id="MobiDB-lite"/>
    </source>
</evidence>
<evidence type="ECO:0000305" key="5"/>
<name>BTGE_ASPFC</name>
<feature type="signal peptide" evidence="3">
    <location>
        <begin position="1"/>
        <end position="18"/>
    </location>
</feature>
<feature type="chain" id="PRO_0000395131" description="Probable beta-glucosidase btgE">
    <location>
        <begin position="19"/>
        <end position="565"/>
    </location>
</feature>
<feature type="region of interest" description="Disordered" evidence="4">
    <location>
        <begin position="246"/>
        <end position="304"/>
    </location>
</feature>
<feature type="compositionally biased region" description="Low complexity" evidence="4">
    <location>
        <begin position="251"/>
        <end position="304"/>
    </location>
</feature>
<feature type="active site" description="Proton donor" evidence="2">
    <location>
        <position position="405"/>
    </location>
</feature>
<feature type="active site" description="Nucleophile" evidence="2">
    <location>
        <position position="501"/>
    </location>
</feature>
<reference key="1">
    <citation type="journal article" date="2008" name="PLoS Genet.">
        <title>Genomic islands in the pathogenic filamentous fungus Aspergillus fumigatus.</title>
        <authorList>
            <person name="Fedorova N.D."/>
            <person name="Khaldi N."/>
            <person name="Joardar V.S."/>
            <person name="Maiti R."/>
            <person name="Amedeo P."/>
            <person name="Anderson M.J."/>
            <person name="Crabtree J."/>
            <person name="Silva J.C."/>
            <person name="Badger J.H."/>
            <person name="Albarraq A."/>
            <person name="Angiuoli S."/>
            <person name="Bussey H."/>
            <person name="Bowyer P."/>
            <person name="Cotty P.J."/>
            <person name="Dyer P.S."/>
            <person name="Egan A."/>
            <person name="Galens K."/>
            <person name="Fraser-Liggett C.M."/>
            <person name="Haas B.J."/>
            <person name="Inman J.M."/>
            <person name="Kent R."/>
            <person name="Lemieux S."/>
            <person name="Malavazi I."/>
            <person name="Orvis J."/>
            <person name="Roemer T."/>
            <person name="Ronning C.M."/>
            <person name="Sundaram J.P."/>
            <person name="Sutton G."/>
            <person name="Turner G."/>
            <person name="Venter J.C."/>
            <person name="White O.R."/>
            <person name="Whitty B.R."/>
            <person name="Youngman P."/>
            <person name="Wolfe K.H."/>
            <person name="Goldman G.H."/>
            <person name="Wortman J.R."/>
            <person name="Jiang B."/>
            <person name="Denning D.W."/>
            <person name="Nierman W.C."/>
        </authorList>
    </citation>
    <scope>NUCLEOTIDE SEQUENCE [LARGE SCALE GENOMIC DNA]</scope>
    <source>
        <strain>CBS 144.89 / FGSC A1163 / CEA10</strain>
    </source>
</reference>
<comment type="function">
    <text evidence="1">Beta-glucosidases are one of a number of cellulolytic enzymes involved in the degradation of cellulosic biomass. Catalyzes the last step releasing glucose from the inhibitory cellobiose (By similarity).</text>
</comment>
<comment type="catalytic activity">
    <reaction>
        <text>Hydrolysis of terminal, non-reducing beta-D-glucosyl residues with release of beta-D-glucose.</text>
        <dbReference type="EC" id="3.2.1.21"/>
    </reaction>
</comment>
<comment type="pathway">
    <text>Glycan metabolism; cellulose degradation.</text>
</comment>
<comment type="subcellular location">
    <subcellularLocation>
        <location evidence="1">Secreted</location>
        <location evidence="1">Cell wall</location>
    </subcellularLocation>
    <text evidence="1">Covalently-linked to the cell wall.</text>
</comment>
<comment type="similarity">
    <text evidence="5">Belongs to the glycosyl hydrolase 17 family.</text>
</comment>
<comment type="sequence caution" evidence="5">
    <conflict type="erroneous gene model prediction">
        <sequence resource="EMBL-CDS" id="EDP48752"/>
    </conflict>
</comment>
<dbReference type="EC" id="3.2.1.21"/>
<dbReference type="EMBL" id="DS499600">
    <property type="protein sequence ID" value="EDP48752.1"/>
    <property type="status" value="ALT_SEQ"/>
    <property type="molecule type" value="Genomic_DNA"/>
</dbReference>
<dbReference type="SMR" id="B0Y9Q9"/>
<dbReference type="OrthoDB" id="129124at5052"/>
<dbReference type="UniPathway" id="UPA00696"/>
<dbReference type="Proteomes" id="UP000001699">
    <property type="component" value="Unassembled WGS sequence"/>
</dbReference>
<dbReference type="GO" id="GO:0009986">
    <property type="term" value="C:cell surface"/>
    <property type="evidence" value="ECO:0007669"/>
    <property type="project" value="TreeGrafter"/>
</dbReference>
<dbReference type="GO" id="GO:0005576">
    <property type="term" value="C:extracellular region"/>
    <property type="evidence" value="ECO:0007669"/>
    <property type="project" value="UniProtKB-KW"/>
</dbReference>
<dbReference type="GO" id="GO:0009277">
    <property type="term" value="C:fungal-type cell wall"/>
    <property type="evidence" value="ECO:0007669"/>
    <property type="project" value="TreeGrafter"/>
</dbReference>
<dbReference type="GO" id="GO:0042973">
    <property type="term" value="F:glucan endo-1,3-beta-D-glucosidase activity"/>
    <property type="evidence" value="ECO:0007669"/>
    <property type="project" value="TreeGrafter"/>
</dbReference>
<dbReference type="GO" id="GO:0071555">
    <property type="term" value="P:cell wall organization"/>
    <property type="evidence" value="ECO:0007669"/>
    <property type="project" value="TreeGrafter"/>
</dbReference>
<dbReference type="GO" id="GO:0030245">
    <property type="term" value="P:cellulose catabolic process"/>
    <property type="evidence" value="ECO:0007669"/>
    <property type="project" value="UniProtKB-UniPathway"/>
</dbReference>
<dbReference type="FunFam" id="3.20.20.80:FF:000165">
    <property type="entry name" value="Cell wall glucanase (Scw11)"/>
    <property type="match status" value="1"/>
</dbReference>
<dbReference type="FunFam" id="3.20.20.80:FF:000160">
    <property type="entry name" value="Probable beta-glucosidase btgE"/>
    <property type="match status" value="1"/>
</dbReference>
<dbReference type="Gene3D" id="3.20.20.80">
    <property type="entry name" value="Glycosidases"/>
    <property type="match status" value="2"/>
</dbReference>
<dbReference type="InterPro" id="IPR050732">
    <property type="entry name" value="Beta-glucan_modifiers"/>
</dbReference>
<dbReference type="InterPro" id="IPR017853">
    <property type="entry name" value="Glycoside_hydrolase_SF"/>
</dbReference>
<dbReference type="PANTHER" id="PTHR16631:SF24">
    <property type="entry name" value="FAMILY 17 GLUCOSIDASE SCW11-RELATED"/>
    <property type="match status" value="1"/>
</dbReference>
<dbReference type="PANTHER" id="PTHR16631">
    <property type="entry name" value="GLUCAN 1,3-BETA-GLUCOSIDASE"/>
    <property type="match status" value="1"/>
</dbReference>
<dbReference type="SUPFAM" id="SSF51445">
    <property type="entry name" value="(Trans)glycosidases"/>
    <property type="match status" value="1"/>
</dbReference>
<sequence length="565" mass="58148">MRGAILATAAALAGTAMADVAHMRRHGHDSFHQRRSPLAEADATCGCTTEVVTVWGPPTLIPVASPTPSTVTSEAVTTLHSTSTTTVTVIASASTPAASPSPATDKVPLPTPAITNFPSTGVYTIPATTVTVFDTTTVCGATTTELPAGTHTYGGVTTVVETATTVVCPYATVEPSGTTVTSVIKTTTYVCPSAGTYTIAPTTTTVPTSTVIVYPTPAVITPGTYTQPEQTVTVTRTDYTYVCPFTGQDEPTSAPAAPSTTAVPATTTAAPETTTAAPDTTTAVPSTSSAAPSSSSTAPASTGAVSGQMGMTYTPYTKGGDCKDKSSVLSEVAALKSKGFTHVRVYSTDCNSLEYIGEAARTSGLQMIIGVFISSTGVSGAQDQVTAISKWAQWDLVSLIVVGNEAIQNGYCDASTLAGFISSAKSAFQAAGYTGKVTTTEPINVWQAHGSTLCGVCDIVGANIHPFFNADVSADQAGKFVAQEIKVLESICPGKDVLNLETGWPHAGNANGKAVPGTSEQAIAIKSIADEVGSKSVFFSYFDDLWKEPGQFGVERYWGCFDTFN</sequence>